<accession>Q65VU9</accession>
<protein>
    <recommendedName>
        <fullName evidence="1">Na(+)-translocating NADH-quinone reductase subunit F</fullName>
        <shortName evidence="1">Na(+)-NQR subunit F</shortName>
        <shortName evidence="1">Na(+)-translocating NQR subunit F</shortName>
        <ecNumber evidence="1">7.2.1.1</ecNumber>
    </recommendedName>
    <alternativeName>
        <fullName evidence="1">NQR complex subunit F</fullName>
    </alternativeName>
    <alternativeName>
        <fullName evidence="1">NQR-1 subunit F</fullName>
    </alternativeName>
</protein>
<organism>
    <name type="scientific">Mannheimia succiniciproducens (strain KCTC 0769BP / MBEL55E)</name>
    <dbReference type="NCBI Taxonomy" id="221988"/>
    <lineage>
        <taxon>Bacteria</taxon>
        <taxon>Pseudomonadati</taxon>
        <taxon>Pseudomonadota</taxon>
        <taxon>Gammaproteobacteria</taxon>
        <taxon>Pasteurellales</taxon>
        <taxon>Pasteurellaceae</taxon>
        <taxon>Basfia</taxon>
    </lineage>
</organism>
<reference key="1">
    <citation type="journal article" date="2004" name="Nat. Biotechnol.">
        <title>The genome sequence of the capnophilic rumen bacterium Mannheimia succiniciproducens.</title>
        <authorList>
            <person name="Hong S.H."/>
            <person name="Kim J.S."/>
            <person name="Lee S.Y."/>
            <person name="In Y.H."/>
            <person name="Choi S.S."/>
            <person name="Rih J.-K."/>
            <person name="Kim C.H."/>
            <person name="Jeong H."/>
            <person name="Hur C.G."/>
            <person name="Kim J.J."/>
        </authorList>
    </citation>
    <scope>NUCLEOTIDE SEQUENCE [LARGE SCALE GENOMIC DNA]</scope>
    <source>
        <strain>KCTC 0769BP / MBEL55E</strain>
    </source>
</reference>
<keyword id="KW-0001">2Fe-2S</keyword>
<keyword id="KW-0997">Cell inner membrane</keyword>
<keyword id="KW-1003">Cell membrane</keyword>
<keyword id="KW-0274">FAD</keyword>
<keyword id="KW-0285">Flavoprotein</keyword>
<keyword id="KW-0406">Ion transport</keyword>
<keyword id="KW-0408">Iron</keyword>
<keyword id="KW-0411">Iron-sulfur</keyword>
<keyword id="KW-0472">Membrane</keyword>
<keyword id="KW-0479">Metal-binding</keyword>
<keyword id="KW-0520">NAD</keyword>
<keyword id="KW-0915">Sodium</keyword>
<keyword id="KW-0739">Sodium transport</keyword>
<keyword id="KW-1278">Translocase</keyword>
<keyword id="KW-0812">Transmembrane</keyword>
<keyword id="KW-1133">Transmembrane helix</keyword>
<keyword id="KW-0813">Transport</keyword>
<keyword id="KW-0830">Ubiquinone</keyword>
<proteinExistence type="inferred from homology"/>
<evidence type="ECO:0000255" key="1">
    <source>
        <dbReference type="HAMAP-Rule" id="MF_00430"/>
    </source>
</evidence>
<feature type="chain" id="PRO_1000080582" description="Na(+)-translocating NADH-quinone reductase subunit F">
    <location>
        <begin position="1"/>
        <end position="409"/>
    </location>
</feature>
<feature type="transmembrane region" description="Helical" evidence="1">
    <location>
        <begin position="5"/>
        <end position="25"/>
    </location>
</feature>
<feature type="domain" description="2Fe-2S ferredoxin-type" evidence="1">
    <location>
        <begin position="34"/>
        <end position="128"/>
    </location>
</feature>
<feature type="domain" description="FAD-binding FR-type" evidence="1">
    <location>
        <begin position="131"/>
        <end position="271"/>
    </location>
</feature>
<feature type="binding site" evidence="1">
    <location>
        <position position="71"/>
    </location>
    <ligand>
        <name>[2Fe-2S] cluster</name>
        <dbReference type="ChEBI" id="CHEBI:190135"/>
    </ligand>
</feature>
<feature type="binding site" evidence="1">
    <location>
        <position position="77"/>
    </location>
    <ligand>
        <name>[2Fe-2S] cluster</name>
        <dbReference type="ChEBI" id="CHEBI:190135"/>
    </ligand>
</feature>
<feature type="binding site" evidence="1">
    <location>
        <position position="80"/>
    </location>
    <ligand>
        <name>[2Fe-2S] cluster</name>
        <dbReference type="ChEBI" id="CHEBI:190135"/>
    </ligand>
</feature>
<feature type="binding site" evidence="1">
    <location>
        <position position="112"/>
    </location>
    <ligand>
        <name>[2Fe-2S] cluster</name>
        <dbReference type="ChEBI" id="CHEBI:190135"/>
    </ligand>
</feature>
<sequence>MDSNFIFGIGAFTAIVLVLAVVILIAKSKLVDSGDITISINNDPEKAITLPAGGKLLGALASKGIFVSSACGGGGSCGQCKVKVKSGGGEILPTELSHISKKEAKEGWRLSCQVNVKSSMDVELPEEVFGVKKWECTVISNDNKATFIKELKLAIPEGEEVPFRAGGYIQIEAEPHTVNYKDFDIPEEYHEDWDKFNLWRYVSKVDEHIIRAYSMASYPEEKGIIMLNVRIATPPPRNPDVPPGQMSSYIWSLKPGDKVTISGPFGEFFAKDTDAEMVFIGGGAGMAPMRSHIFDQLKRLHSKRKISFWYGARSKREMFYVEDFDQLQAENDNFTWHVALSDPLPEDNWDGYTGFIHNVLYENYLKNHEAPEDCEYYMCGPPVMNAAVINMLESLGVEHENILLDDFGG</sequence>
<name>NQRF_MANSM</name>
<comment type="function">
    <text evidence="1">NQR complex catalyzes the reduction of ubiquinone-1 to ubiquinol by two successive reactions, coupled with the transport of Na(+) ions from the cytoplasm to the periplasm. The first step is catalyzed by NqrF, which accepts electrons from NADH and reduces ubiquinone-1 to ubisemiquinone by a one-electron transfer pathway.</text>
</comment>
<comment type="catalytic activity">
    <reaction evidence="1">
        <text>a ubiquinone + n Na(+)(in) + NADH + H(+) = a ubiquinol + n Na(+)(out) + NAD(+)</text>
        <dbReference type="Rhea" id="RHEA:47748"/>
        <dbReference type="Rhea" id="RHEA-COMP:9565"/>
        <dbReference type="Rhea" id="RHEA-COMP:9566"/>
        <dbReference type="ChEBI" id="CHEBI:15378"/>
        <dbReference type="ChEBI" id="CHEBI:16389"/>
        <dbReference type="ChEBI" id="CHEBI:17976"/>
        <dbReference type="ChEBI" id="CHEBI:29101"/>
        <dbReference type="ChEBI" id="CHEBI:57540"/>
        <dbReference type="ChEBI" id="CHEBI:57945"/>
        <dbReference type="EC" id="7.2.1.1"/>
    </reaction>
</comment>
<comment type="cofactor">
    <cofactor evidence="1">
        <name>[2Fe-2S] cluster</name>
        <dbReference type="ChEBI" id="CHEBI:190135"/>
    </cofactor>
    <text evidence="1">Binds 1 [2Fe-2S] cluster.</text>
</comment>
<comment type="cofactor">
    <cofactor evidence="1">
        <name>FAD</name>
        <dbReference type="ChEBI" id="CHEBI:57692"/>
    </cofactor>
</comment>
<comment type="subunit">
    <text evidence="1">Composed of six subunits; NqrA, NqrB, NqrC, NqrD, NqrE and NqrF.</text>
</comment>
<comment type="subcellular location">
    <subcellularLocation>
        <location evidence="1">Cell inner membrane</location>
        <topology evidence="1">Single-pass membrane protein</topology>
    </subcellularLocation>
</comment>
<comment type="similarity">
    <text evidence="1">Belongs to the NqrF family.</text>
</comment>
<dbReference type="EC" id="7.2.1.1" evidence="1"/>
<dbReference type="EMBL" id="AE016827">
    <property type="protein sequence ID" value="AAU36911.1"/>
    <property type="molecule type" value="Genomic_DNA"/>
</dbReference>
<dbReference type="RefSeq" id="WP_011199486.1">
    <property type="nucleotide sequence ID" value="NC_006300.1"/>
</dbReference>
<dbReference type="SMR" id="Q65VU9"/>
<dbReference type="STRING" id="221988.MS0304"/>
<dbReference type="KEGG" id="msu:MS0304"/>
<dbReference type="eggNOG" id="COG2871">
    <property type="taxonomic scope" value="Bacteria"/>
</dbReference>
<dbReference type="HOGENOM" id="CLU_003827_7_2_6"/>
<dbReference type="OrthoDB" id="9806195at2"/>
<dbReference type="Proteomes" id="UP000000607">
    <property type="component" value="Chromosome"/>
</dbReference>
<dbReference type="GO" id="GO:0005886">
    <property type="term" value="C:plasma membrane"/>
    <property type="evidence" value="ECO:0007669"/>
    <property type="project" value="UniProtKB-SubCell"/>
</dbReference>
<dbReference type="GO" id="GO:0051537">
    <property type="term" value="F:2 iron, 2 sulfur cluster binding"/>
    <property type="evidence" value="ECO:0007669"/>
    <property type="project" value="UniProtKB-KW"/>
</dbReference>
<dbReference type="GO" id="GO:0009055">
    <property type="term" value="F:electron transfer activity"/>
    <property type="evidence" value="ECO:0007669"/>
    <property type="project" value="UniProtKB-UniRule"/>
</dbReference>
<dbReference type="GO" id="GO:0046872">
    <property type="term" value="F:metal ion binding"/>
    <property type="evidence" value="ECO:0007669"/>
    <property type="project" value="UniProtKB-KW"/>
</dbReference>
<dbReference type="GO" id="GO:0016655">
    <property type="term" value="F:oxidoreductase activity, acting on NAD(P)H, quinone or similar compound as acceptor"/>
    <property type="evidence" value="ECO:0007669"/>
    <property type="project" value="InterPro"/>
</dbReference>
<dbReference type="GO" id="GO:0006814">
    <property type="term" value="P:sodium ion transport"/>
    <property type="evidence" value="ECO:0007669"/>
    <property type="project" value="UniProtKB-UniRule"/>
</dbReference>
<dbReference type="CDD" id="cd06188">
    <property type="entry name" value="NADH_quinone_reductase"/>
    <property type="match status" value="1"/>
</dbReference>
<dbReference type="FunFam" id="2.40.30.10:FF:000064">
    <property type="entry name" value="Na(+)-translocating NADH-quinone reductase subunit F"/>
    <property type="match status" value="1"/>
</dbReference>
<dbReference type="FunFam" id="3.40.50.80:FF:000014">
    <property type="entry name" value="Na(+)-translocating NADH-quinone reductase subunit F"/>
    <property type="match status" value="1"/>
</dbReference>
<dbReference type="Gene3D" id="3.10.20.30">
    <property type="match status" value="1"/>
</dbReference>
<dbReference type="Gene3D" id="3.40.50.80">
    <property type="entry name" value="Nucleotide-binding domain of ferredoxin-NADP reductase (FNR) module"/>
    <property type="match status" value="1"/>
</dbReference>
<dbReference type="Gene3D" id="2.40.30.10">
    <property type="entry name" value="Translation factors"/>
    <property type="match status" value="1"/>
</dbReference>
<dbReference type="HAMAP" id="MF_00430">
    <property type="entry name" value="NqrF"/>
    <property type="match status" value="1"/>
</dbReference>
<dbReference type="InterPro" id="IPR036010">
    <property type="entry name" value="2Fe-2S_ferredoxin-like_sf"/>
</dbReference>
<dbReference type="InterPro" id="IPR001041">
    <property type="entry name" value="2Fe-2S_ferredoxin-type"/>
</dbReference>
<dbReference type="InterPro" id="IPR012675">
    <property type="entry name" value="Beta-grasp_dom_sf"/>
</dbReference>
<dbReference type="InterPro" id="IPR008333">
    <property type="entry name" value="Cbr1-like_FAD-bd_dom"/>
</dbReference>
<dbReference type="InterPro" id="IPR017927">
    <property type="entry name" value="FAD-bd_FR_type"/>
</dbReference>
<dbReference type="InterPro" id="IPR039261">
    <property type="entry name" value="FNR_nucleotide-bd"/>
</dbReference>
<dbReference type="InterPro" id="IPR010205">
    <property type="entry name" value="NqrF"/>
</dbReference>
<dbReference type="InterPro" id="IPR001433">
    <property type="entry name" value="OxRdtase_FAD/NAD-bd"/>
</dbReference>
<dbReference type="InterPro" id="IPR017938">
    <property type="entry name" value="Riboflavin_synthase-like_b-brl"/>
</dbReference>
<dbReference type="NCBIfam" id="TIGR01941">
    <property type="entry name" value="nqrF"/>
    <property type="match status" value="1"/>
</dbReference>
<dbReference type="PANTHER" id="PTHR43644">
    <property type="entry name" value="NA(+)-TRANSLOCATING NADH-QUINONE REDUCTASE SUBUNIT"/>
    <property type="match status" value="1"/>
</dbReference>
<dbReference type="PANTHER" id="PTHR43644:SF1">
    <property type="entry name" value="NAD(P)H-FLAVIN REDUCTASE"/>
    <property type="match status" value="1"/>
</dbReference>
<dbReference type="Pfam" id="PF00970">
    <property type="entry name" value="FAD_binding_6"/>
    <property type="match status" value="1"/>
</dbReference>
<dbReference type="Pfam" id="PF00111">
    <property type="entry name" value="Fer2"/>
    <property type="match status" value="1"/>
</dbReference>
<dbReference type="Pfam" id="PF00175">
    <property type="entry name" value="NAD_binding_1"/>
    <property type="match status" value="1"/>
</dbReference>
<dbReference type="PIRSF" id="PIRSF000044">
    <property type="entry name" value="Cis_Diol_DH_RD"/>
    <property type="match status" value="1"/>
</dbReference>
<dbReference type="SUPFAM" id="SSF54292">
    <property type="entry name" value="2Fe-2S ferredoxin-like"/>
    <property type="match status" value="1"/>
</dbReference>
<dbReference type="SUPFAM" id="SSF52343">
    <property type="entry name" value="Ferredoxin reductase-like, C-terminal NADP-linked domain"/>
    <property type="match status" value="1"/>
</dbReference>
<dbReference type="SUPFAM" id="SSF63380">
    <property type="entry name" value="Riboflavin synthase domain-like"/>
    <property type="match status" value="1"/>
</dbReference>
<dbReference type="PROSITE" id="PS51085">
    <property type="entry name" value="2FE2S_FER_2"/>
    <property type="match status" value="1"/>
</dbReference>
<dbReference type="PROSITE" id="PS51384">
    <property type="entry name" value="FAD_FR"/>
    <property type="match status" value="1"/>
</dbReference>
<gene>
    <name evidence="1" type="primary">nqrF</name>
    <name type="ordered locus">MS0304</name>
</gene>